<proteinExistence type="inferred from homology"/>
<reference key="1">
    <citation type="journal article" date="2002" name="Proc. Natl. Acad. Sci. U.S.A.">
        <title>Extensive mosaic structure revealed by the complete genome sequence of uropathogenic Escherichia coli.</title>
        <authorList>
            <person name="Welch R.A."/>
            <person name="Burland V."/>
            <person name="Plunkett G. III"/>
            <person name="Redford P."/>
            <person name="Roesch P."/>
            <person name="Rasko D."/>
            <person name="Buckles E.L."/>
            <person name="Liou S.-R."/>
            <person name="Boutin A."/>
            <person name="Hackett J."/>
            <person name="Stroud D."/>
            <person name="Mayhew G.F."/>
            <person name="Rose D.J."/>
            <person name="Zhou S."/>
            <person name="Schwartz D.C."/>
            <person name="Perna N.T."/>
            <person name="Mobley H.L.T."/>
            <person name="Donnenberg M.S."/>
            <person name="Blattner F.R."/>
        </authorList>
    </citation>
    <scope>NUCLEOTIDE SEQUENCE [LARGE SCALE GENOMIC DNA]</scope>
    <source>
        <strain>CFT073 / ATCC 700928 / UPEC</strain>
    </source>
</reference>
<name>PPNN_ECOL6</name>
<accession>P0ADR9</accession>
<accession>P37350</accession>
<accession>Q46921</accession>
<evidence type="ECO:0000250" key="1">
    <source>
        <dbReference type="UniProtKB" id="P0ADR8"/>
    </source>
</evidence>
<evidence type="ECO:0000305" key="2"/>
<feature type="chain" id="PRO_0000169336" description="Pyrimidine/purine nucleotide 5'-monophosphate nucleosidase">
    <location>
        <begin position="1"/>
        <end position="454"/>
    </location>
</feature>
<organism>
    <name type="scientific">Escherichia coli O6:H1 (strain CFT073 / ATCC 700928 / UPEC)</name>
    <dbReference type="NCBI Taxonomy" id="199310"/>
    <lineage>
        <taxon>Bacteria</taxon>
        <taxon>Pseudomonadati</taxon>
        <taxon>Pseudomonadota</taxon>
        <taxon>Gammaproteobacteria</taxon>
        <taxon>Enterobacterales</taxon>
        <taxon>Enterobacteriaceae</taxon>
        <taxon>Escherichia</taxon>
    </lineage>
</organism>
<protein>
    <recommendedName>
        <fullName evidence="1">Pyrimidine/purine nucleotide 5'-monophosphate nucleosidase</fullName>
        <ecNumber evidence="1">3.2.2.-</ecNumber>
        <ecNumber evidence="1">3.2.2.10</ecNumber>
    </recommendedName>
    <alternativeName>
        <fullName evidence="1">AMP nucleosidase</fullName>
        <ecNumber evidence="1">3.2.2.4</ecNumber>
    </alternativeName>
    <alternativeName>
        <fullName evidence="1">CMP nucleosidase</fullName>
    </alternativeName>
    <alternativeName>
        <fullName evidence="1">GMP nucleosidase</fullName>
    </alternativeName>
    <alternativeName>
        <fullName evidence="1">IMP nucleosidase</fullName>
    </alternativeName>
    <alternativeName>
        <fullName evidence="1">UMP nucleosidase</fullName>
    </alternativeName>
    <alternativeName>
        <fullName evidence="1">dTMP nucleosidase</fullName>
    </alternativeName>
</protein>
<comment type="function">
    <text evidence="1">Catalyzes the hydrolysis of the N-glycosidic bond of diverse pyrimidine and purine nucleotide 5'-monophosphates, to form ribose 5-phosphate and the corresponding free base. Can use AMP, GMP, IMP, CMP, dTMP and UMP as substrates. Cannot catalyze the reverse reactions. May contribute to nucleoside pool homeostasis by degrading excess nucleotides and feeding back the ribose moiety to catabolism.</text>
</comment>
<comment type="catalytic activity">
    <reaction evidence="1">
        <text>a pyrimidine ribonucleoside 5'-phosphate + H2O = a pyrimidine nucleobase + D-ribose 5-phosphate</text>
        <dbReference type="Rhea" id="RHEA:13425"/>
        <dbReference type="ChEBI" id="CHEBI:15377"/>
        <dbReference type="ChEBI" id="CHEBI:26432"/>
        <dbReference type="ChEBI" id="CHEBI:78346"/>
        <dbReference type="ChEBI" id="CHEBI:138238"/>
        <dbReference type="EC" id="3.2.2.10"/>
    </reaction>
</comment>
<comment type="catalytic activity">
    <reaction evidence="1">
        <text>AMP + H2O = adenine + D-ribose 5-phosphate</text>
        <dbReference type="Rhea" id="RHEA:20129"/>
        <dbReference type="ChEBI" id="CHEBI:15377"/>
        <dbReference type="ChEBI" id="CHEBI:16708"/>
        <dbReference type="ChEBI" id="CHEBI:78346"/>
        <dbReference type="ChEBI" id="CHEBI:456215"/>
        <dbReference type="EC" id="3.2.2.4"/>
    </reaction>
</comment>
<comment type="catalytic activity">
    <reaction evidence="1">
        <text>GMP + H2O = guanine + D-ribose 5-phosphate</text>
        <dbReference type="Rhea" id="RHEA:52708"/>
        <dbReference type="ChEBI" id="CHEBI:15377"/>
        <dbReference type="ChEBI" id="CHEBI:16235"/>
        <dbReference type="ChEBI" id="CHEBI:58115"/>
        <dbReference type="ChEBI" id="CHEBI:78346"/>
    </reaction>
</comment>
<comment type="catalytic activity">
    <reaction evidence="1">
        <text>CMP + H2O = cytosine + D-ribose 5-phosphate</text>
        <dbReference type="Rhea" id="RHEA:30075"/>
        <dbReference type="ChEBI" id="CHEBI:15377"/>
        <dbReference type="ChEBI" id="CHEBI:16040"/>
        <dbReference type="ChEBI" id="CHEBI:60377"/>
        <dbReference type="ChEBI" id="CHEBI:78346"/>
        <dbReference type="EC" id="3.2.2.10"/>
    </reaction>
</comment>
<comment type="catalytic activity">
    <reaction evidence="1">
        <text>IMP + H2O = hypoxanthine + D-ribose 5-phosphate</text>
        <dbReference type="Rhea" id="RHEA:20469"/>
        <dbReference type="ChEBI" id="CHEBI:15377"/>
        <dbReference type="ChEBI" id="CHEBI:17368"/>
        <dbReference type="ChEBI" id="CHEBI:58053"/>
        <dbReference type="ChEBI" id="CHEBI:78346"/>
    </reaction>
</comment>
<comment type="catalytic activity">
    <reaction evidence="1">
        <text>UMP + H2O = D-ribose 5-phosphate + uracil</text>
        <dbReference type="Rhea" id="RHEA:52704"/>
        <dbReference type="ChEBI" id="CHEBI:15377"/>
        <dbReference type="ChEBI" id="CHEBI:17568"/>
        <dbReference type="ChEBI" id="CHEBI:57865"/>
        <dbReference type="ChEBI" id="CHEBI:78346"/>
    </reaction>
</comment>
<comment type="catalytic activity">
    <reaction evidence="1">
        <text>dTMP + H2O = 2-deoxy-D-ribose 5-phosphate + thymine</text>
        <dbReference type="Rhea" id="RHEA:52712"/>
        <dbReference type="ChEBI" id="CHEBI:15377"/>
        <dbReference type="ChEBI" id="CHEBI:17821"/>
        <dbReference type="ChEBI" id="CHEBI:62877"/>
        <dbReference type="ChEBI" id="CHEBI:63528"/>
    </reaction>
</comment>
<comment type="similarity">
    <text evidence="2">Belongs to the LOG family.</text>
</comment>
<keyword id="KW-0378">Hydrolase</keyword>
<keyword id="KW-1185">Reference proteome</keyword>
<dbReference type="EC" id="3.2.2.-" evidence="1"/>
<dbReference type="EC" id="3.2.2.10" evidence="1"/>
<dbReference type="EC" id="3.2.2.4" evidence="1"/>
<dbReference type="EMBL" id="AE014075">
    <property type="protein sequence ID" value="AAN81808.1"/>
    <property type="molecule type" value="Genomic_DNA"/>
</dbReference>
<dbReference type="RefSeq" id="WP_000627995.1">
    <property type="nucleotide sequence ID" value="NZ_CP051263.1"/>
</dbReference>
<dbReference type="SMR" id="P0ADR9"/>
<dbReference type="STRING" id="199310.c3361"/>
<dbReference type="GeneID" id="75203814"/>
<dbReference type="KEGG" id="ecc:c3361"/>
<dbReference type="eggNOG" id="COG1611">
    <property type="taxonomic scope" value="Bacteria"/>
</dbReference>
<dbReference type="HOGENOM" id="CLU_047550_0_0_6"/>
<dbReference type="BioCyc" id="ECOL199310:C3361-MONOMER"/>
<dbReference type="Proteomes" id="UP000001410">
    <property type="component" value="Chromosome"/>
</dbReference>
<dbReference type="GO" id="GO:0005829">
    <property type="term" value="C:cytosol"/>
    <property type="evidence" value="ECO:0007669"/>
    <property type="project" value="TreeGrafter"/>
</dbReference>
<dbReference type="GO" id="GO:0008714">
    <property type="term" value="F:AMP nucleosidase activity"/>
    <property type="evidence" value="ECO:0007669"/>
    <property type="project" value="UniProtKB-EC"/>
</dbReference>
<dbReference type="GO" id="GO:0047723">
    <property type="term" value="F:inosinate nucleosidase activity"/>
    <property type="evidence" value="ECO:0007669"/>
    <property type="project" value="RHEA"/>
</dbReference>
<dbReference type="GO" id="GO:0047405">
    <property type="term" value="F:pyrimidine-5'-nucleotide nucleosidase activity"/>
    <property type="evidence" value="ECO:0007669"/>
    <property type="project" value="UniProtKB-EC"/>
</dbReference>
<dbReference type="FunFam" id="3.30.1850.10:FF:000001">
    <property type="entry name" value="LOG family protein YgdH"/>
    <property type="match status" value="1"/>
</dbReference>
<dbReference type="FunFam" id="3.40.50.450:FF:000007">
    <property type="entry name" value="LOG family protein ygdH"/>
    <property type="match status" value="1"/>
</dbReference>
<dbReference type="Gene3D" id="3.40.50.450">
    <property type="match status" value="1"/>
</dbReference>
<dbReference type="Gene3D" id="3.30.1850.10">
    <property type="entry name" value="MoCo carrier protein-like"/>
    <property type="match status" value="1"/>
</dbReference>
<dbReference type="InterPro" id="IPR031100">
    <property type="entry name" value="LOG_fam"/>
</dbReference>
<dbReference type="InterPro" id="IPR052341">
    <property type="entry name" value="LOG_family_nucleotidases"/>
</dbReference>
<dbReference type="InterPro" id="IPR049788">
    <property type="entry name" value="PpnN"/>
</dbReference>
<dbReference type="InterPro" id="IPR037153">
    <property type="entry name" value="PpnN-like_sf"/>
</dbReference>
<dbReference type="InterPro" id="IPR021826">
    <property type="entry name" value="PpnN_C"/>
</dbReference>
<dbReference type="InterPro" id="IPR027820">
    <property type="entry name" value="PpnN_N"/>
</dbReference>
<dbReference type="NCBIfam" id="NF038390">
    <property type="entry name" value="Nsidase_PpnN"/>
    <property type="match status" value="1"/>
</dbReference>
<dbReference type="PANTHER" id="PTHR43393">
    <property type="entry name" value="CYTOKININ RIBOSIDE 5'-MONOPHOSPHATE PHOSPHORIBOHYDROLASE"/>
    <property type="match status" value="1"/>
</dbReference>
<dbReference type="PANTHER" id="PTHR43393:SF1">
    <property type="entry name" value="PYRIMIDINE_PURINE NUCLEOTIDE 5'-MONOPHOSPHATE NUCLEOSIDASE"/>
    <property type="match status" value="1"/>
</dbReference>
<dbReference type="Pfam" id="PF14793">
    <property type="entry name" value="DUF4478"/>
    <property type="match status" value="1"/>
</dbReference>
<dbReference type="Pfam" id="PF03641">
    <property type="entry name" value="Lysine_decarbox"/>
    <property type="match status" value="1"/>
</dbReference>
<dbReference type="Pfam" id="PF11892">
    <property type="entry name" value="PpnN_C"/>
    <property type="match status" value="1"/>
</dbReference>
<dbReference type="SUPFAM" id="SSF102405">
    <property type="entry name" value="MCP/YpsA-like"/>
    <property type="match status" value="1"/>
</dbReference>
<gene>
    <name evidence="1" type="primary">ppnN</name>
    <name type="synonym">ygdH</name>
    <name type="ordered locus">c3361</name>
</gene>
<sequence>MITHISPLGSMDMLSQLEVDMLKRTASSDLYQLFRNCSLAVLNSGSLTDNSKELLSRFENFDINVLRRERGVKLELINPPEEAFVDGRIIRALQANLFAVLRDILFVYGQIHNTVRFPNLNLDNSVHITNLVFSILRNARALHVGEAPNMVVCWGGHSINENEYLYARRVGNQLGLRELNICTGCGPGAMEAPMKGAAVGHAQQRYKDSRFIGMTEPSIIAAEPPNPLVNELIIMPDIEKRLEAFVRIAHGIIIFPGGVGTAEELLYLLGILMNPANKDQVLPLILTGPKESADYFRVLDEFVVHTLGENARRHYRIIIDDAAEVARQMKKSMPLVKENRRDTGDAYSFNWSMRIAPDLQMPFEPSHENMANLKLYPDQPVEVLAADLRRAFSGIVAGNVKEVGIRAIEEFGPYKINGDKEIMRRMDDLLQGFVAQHRMKLPGSAYIPCYEICT</sequence>